<protein>
    <recommendedName>
        <fullName>Protein WFDC9</fullName>
    </recommendedName>
</protein>
<proteinExistence type="evidence at protein level"/>
<sequence length="89" mass="10506">MKPWILLLVMFISGVVMLLPVLGSFWNKDPFLDMIRETEQCWVQPPYKYCEKRCTKIMTCVRPNHTCCWTYCGNICLDNEEPLKSMLNP</sequence>
<evidence type="ECO:0000255" key="1"/>
<evidence type="ECO:0000305" key="2"/>
<organism>
    <name type="scientific">Homo sapiens</name>
    <name type="common">Human</name>
    <dbReference type="NCBI Taxonomy" id="9606"/>
    <lineage>
        <taxon>Eukaryota</taxon>
        <taxon>Metazoa</taxon>
        <taxon>Chordata</taxon>
        <taxon>Craniata</taxon>
        <taxon>Vertebrata</taxon>
        <taxon>Euteleostomi</taxon>
        <taxon>Mammalia</taxon>
        <taxon>Eutheria</taxon>
        <taxon>Euarchontoglires</taxon>
        <taxon>Primates</taxon>
        <taxon>Haplorrhini</taxon>
        <taxon>Catarrhini</taxon>
        <taxon>Hominidae</taxon>
        <taxon>Homo</taxon>
    </lineage>
</organism>
<feature type="signal peptide" evidence="1">
    <location>
        <begin position="1"/>
        <end position="23"/>
    </location>
</feature>
<feature type="chain" id="PRO_0000041385" description="Protein WFDC9">
    <location>
        <begin position="24"/>
        <end position="89"/>
    </location>
</feature>
<feature type="sequence variant" id="VAR_021911" description="In dbSNP:rs2245898.">
    <original>N</original>
    <variation>T</variation>
    <location>
        <position position="27"/>
    </location>
</feature>
<comment type="interaction">
    <interactant intactId="EBI-10270812">
        <id>Q8NEX5</id>
    </interactant>
    <interactant intactId="EBI-748397">
        <id>P50222</id>
        <label>MEOX2</label>
    </interactant>
    <organismsDiffer>false</organismsDiffer>
    <experiments>3</experiments>
</comment>
<comment type="subcellular location">
    <subcellularLocation>
        <location evidence="2">Secreted</location>
    </subcellularLocation>
</comment>
<comment type="miscellaneous">
    <text>Although this protein was isolated in a region containing several WAP proteins and was defined as a WAP protein, it does not contain a classical WAP domain.</text>
</comment>
<reference key="1">
    <citation type="journal article" date="2002" name="Biochem. J.">
        <title>A locus on human chromosome 20 contains several genes expressing protease inhibitor domains with homology to whey acidic protein.</title>
        <authorList>
            <person name="Clauss A."/>
            <person name="Lilja H."/>
            <person name="Lundwall A."/>
        </authorList>
    </citation>
    <scope>NUCLEOTIDE SEQUENCE [MRNA]</scope>
</reference>
<reference key="2">
    <citation type="journal article" date="2001" name="Nature">
        <title>The DNA sequence and comparative analysis of human chromosome 20.</title>
        <authorList>
            <person name="Deloukas P."/>
            <person name="Matthews L.H."/>
            <person name="Ashurst J.L."/>
            <person name="Burton J."/>
            <person name="Gilbert J.G.R."/>
            <person name="Jones M."/>
            <person name="Stavrides G."/>
            <person name="Almeida J.P."/>
            <person name="Babbage A.K."/>
            <person name="Bagguley C.L."/>
            <person name="Bailey J."/>
            <person name="Barlow K.F."/>
            <person name="Bates K.N."/>
            <person name="Beard L.M."/>
            <person name="Beare D.M."/>
            <person name="Beasley O.P."/>
            <person name="Bird C.P."/>
            <person name="Blakey S.E."/>
            <person name="Bridgeman A.M."/>
            <person name="Brown A.J."/>
            <person name="Buck D."/>
            <person name="Burrill W.D."/>
            <person name="Butler A.P."/>
            <person name="Carder C."/>
            <person name="Carter N.P."/>
            <person name="Chapman J.C."/>
            <person name="Clamp M."/>
            <person name="Clark G."/>
            <person name="Clark L.N."/>
            <person name="Clark S.Y."/>
            <person name="Clee C.M."/>
            <person name="Clegg S."/>
            <person name="Cobley V.E."/>
            <person name="Collier R.E."/>
            <person name="Connor R.E."/>
            <person name="Corby N.R."/>
            <person name="Coulson A."/>
            <person name="Coville G.J."/>
            <person name="Deadman R."/>
            <person name="Dhami P.D."/>
            <person name="Dunn M."/>
            <person name="Ellington A.G."/>
            <person name="Frankland J.A."/>
            <person name="Fraser A."/>
            <person name="French L."/>
            <person name="Garner P."/>
            <person name="Grafham D.V."/>
            <person name="Griffiths C."/>
            <person name="Griffiths M.N.D."/>
            <person name="Gwilliam R."/>
            <person name="Hall R.E."/>
            <person name="Hammond S."/>
            <person name="Harley J.L."/>
            <person name="Heath P.D."/>
            <person name="Ho S."/>
            <person name="Holden J.L."/>
            <person name="Howden P.J."/>
            <person name="Huckle E."/>
            <person name="Hunt A.R."/>
            <person name="Hunt S.E."/>
            <person name="Jekosch K."/>
            <person name="Johnson C.M."/>
            <person name="Johnson D."/>
            <person name="Kay M.P."/>
            <person name="Kimberley A.M."/>
            <person name="King A."/>
            <person name="Knights A."/>
            <person name="Laird G.K."/>
            <person name="Lawlor S."/>
            <person name="Lehvaeslaiho M.H."/>
            <person name="Leversha M.A."/>
            <person name="Lloyd C."/>
            <person name="Lloyd D.M."/>
            <person name="Lovell J.D."/>
            <person name="Marsh V.L."/>
            <person name="Martin S.L."/>
            <person name="McConnachie L.J."/>
            <person name="McLay K."/>
            <person name="McMurray A.A."/>
            <person name="Milne S.A."/>
            <person name="Mistry D."/>
            <person name="Moore M.J.F."/>
            <person name="Mullikin J.C."/>
            <person name="Nickerson T."/>
            <person name="Oliver K."/>
            <person name="Parker A."/>
            <person name="Patel R."/>
            <person name="Pearce T.A.V."/>
            <person name="Peck A.I."/>
            <person name="Phillimore B.J.C.T."/>
            <person name="Prathalingam S.R."/>
            <person name="Plumb R.W."/>
            <person name="Ramsay H."/>
            <person name="Rice C.M."/>
            <person name="Ross M.T."/>
            <person name="Scott C.E."/>
            <person name="Sehra H.K."/>
            <person name="Shownkeen R."/>
            <person name="Sims S."/>
            <person name="Skuce C.D."/>
            <person name="Smith M.L."/>
            <person name="Soderlund C."/>
            <person name="Steward C.A."/>
            <person name="Sulston J.E."/>
            <person name="Swann R.M."/>
            <person name="Sycamore N."/>
            <person name="Taylor R."/>
            <person name="Tee L."/>
            <person name="Thomas D.W."/>
            <person name="Thorpe A."/>
            <person name="Tracey A."/>
            <person name="Tromans A.C."/>
            <person name="Vaudin M."/>
            <person name="Wall M."/>
            <person name="Wallis J.M."/>
            <person name="Whitehead S.L."/>
            <person name="Whittaker P."/>
            <person name="Willey D.L."/>
            <person name="Williams L."/>
            <person name="Williams S.A."/>
            <person name="Wilming L."/>
            <person name="Wray P.W."/>
            <person name="Hubbard T."/>
            <person name="Durbin R.M."/>
            <person name="Bentley D.R."/>
            <person name="Beck S."/>
            <person name="Rogers J."/>
        </authorList>
    </citation>
    <scope>NUCLEOTIDE SEQUENCE [LARGE SCALE GENOMIC DNA]</scope>
</reference>
<reference key="3">
    <citation type="journal article" date="2004" name="Genome Res.">
        <title>The status, quality, and expansion of the NIH full-length cDNA project: the Mammalian Gene Collection (MGC).</title>
        <authorList>
            <consortium name="The MGC Project Team"/>
        </authorList>
    </citation>
    <scope>NUCLEOTIDE SEQUENCE [LARGE SCALE MRNA]</scope>
    <source>
        <tissue>Cerebellum</tissue>
    </source>
</reference>
<dbReference type="EMBL" id="AY047610">
    <property type="protein sequence ID" value="AAK97772.1"/>
    <property type="molecule type" value="mRNA"/>
</dbReference>
<dbReference type="EMBL" id="AL031671">
    <property type="status" value="NOT_ANNOTATED_CDS"/>
    <property type="molecule type" value="Genomic_DNA"/>
</dbReference>
<dbReference type="EMBL" id="BC069295">
    <property type="protein sequence ID" value="AAH69295.1"/>
    <property type="molecule type" value="mRNA"/>
</dbReference>
<dbReference type="EMBL" id="BC101652">
    <property type="protein sequence ID" value="AAI01653.1"/>
    <property type="molecule type" value="mRNA"/>
</dbReference>
<dbReference type="EMBL" id="BC101656">
    <property type="protein sequence ID" value="AAI01657.1"/>
    <property type="molecule type" value="mRNA"/>
</dbReference>
<dbReference type="CCDS" id="CCDS13362.1"/>
<dbReference type="RefSeq" id="NP_671731.1">
    <property type="nucleotide sequence ID" value="NM_147198.4"/>
</dbReference>
<dbReference type="BioGRID" id="129232">
    <property type="interactions" value="12"/>
</dbReference>
<dbReference type="FunCoup" id="Q8NEX5">
    <property type="interactions" value="2"/>
</dbReference>
<dbReference type="IntAct" id="Q8NEX5">
    <property type="interactions" value="5"/>
</dbReference>
<dbReference type="STRING" id="9606.ENSP00000320532"/>
<dbReference type="iPTMnet" id="Q8NEX5"/>
<dbReference type="PhosphoSitePlus" id="Q8NEX5"/>
<dbReference type="BioMuta" id="WFDC9"/>
<dbReference type="DMDM" id="26401304"/>
<dbReference type="MassIVE" id="Q8NEX5"/>
<dbReference type="PaxDb" id="9606-ENSP00000320532"/>
<dbReference type="PeptideAtlas" id="Q8NEX5"/>
<dbReference type="ProteomicsDB" id="73227"/>
<dbReference type="Antibodypedia" id="53788">
    <property type="antibodies" value="25 antibodies from 4 providers"/>
</dbReference>
<dbReference type="DNASU" id="259240"/>
<dbReference type="Ensembl" id="ENST00000326000.2">
    <property type="protein sequence ID" value="ENSP00000320532.1"/>
    <property type="gene ID" value="ENSG00000180205.4"/>
</dbReference>
<dbReference type="GeneID" id="259240"/>
<dbReference type="KEGG" id="hsa:259240"/>
<dbReference type="MANE-Select" id="ENST00000326000.2">
    <property type="protein sequence ID" value="ENSP00000320532.1"/>
    <property type="RefSeq nucleotide sequence ID" value="NM_147198.4"/>
    <property type="RefSeq protein sequence ID" value="NP_671731.1"/>
</dbReference>
<dbReference type="UCSC" id="uc002xoy.3">
    <property type="organism name" value="human"/>
</dbReference>
<dbReference type="AGR" id="HGNC:20380"/>
<dbReference type="CTD" id="259240"/>
<dbReference type="GeneCards" id="WFDC9"/>
<dbReference type="HGNC" id="HGNC:20380">
    <property type="gene designation" value="WFDC9"/>
</dbReference>
<dbReference type="HPA" id="ENSG00000180205">
    <property type="expression patterns" value="Tissue enriched (epididymis)"/>
</dbReference>
<dbReference type="neXtProt" id="NX_Q8NEX5"/>
<dbReference type="PharmGKB" id="PA134934414"/>
<dbReference type="VEuPathDB" id="HostDB:ENSG00000180205"/>
<dbReference type="eggNOG" id="ENOG502TGNJ">
    <property type="taxonomic scope" value="Eukaryota"/>
</dbReference>
<dbReference type="GeneTree" id="ENSGT00940000162961"/>
<dbReference type="HOGENOM" id="CLU_191873_0_0_1"/>
<dbReference type="InParanoid" id="Q8NEX5"/>
<dbReference type="OMA" id="IEQCWVQ"/>
<dbReference type="OrthoDB" id="9699870at2759"/>
<dbReference type="PAN-GO" id="Q8NEX5">
    <property type="GO annotations" value="4 GO annotations based on evolutionary models"/>
</dbReference>
<dbReference type="PhylomeDB" id="Q8NEX5"/>
<dbReference type="TreeFam" id="TF338513"/>
<dbReference type="PathwayCommons" id="Q8NEX5"/>
<dbReference type="SignaLink" id="Q8NEX5"/>
<dbReference type="BioGRID-ORCS" id="259240">
    <property type="hits" value="43 hits in 1096 CRISPR screens"/>
</dbReference>
<dbReference type="ChiTaRS" id="WFDC9">
    <property type="organism name" value="human"/>
</dbReference>
<dbReference type="GenomeRNAi" id="259240"/>
<dbReference type="Pharos" id="Q8NEX5">
    <property type="development level" value="Tdark"/>
</dbReference>
<dbReference type="PRO" id="PR:Q8NEX5"/>
<dbReference type="Proteomes" id="UP000005640">
    <property type="component" value="Chromosome 20"/>
</dbReference>
<dbReference type="RNAct" id="Q8NEX5">
    <property type="molecule type" value="protein"/>
</dbReference>
<dbReference type="Bgee" id="ENSG00000180205">
    <property type="expression patterns" value="Expressed in corpus epididymis and 18 other cell types or tissues"/>
</dbReference>
<dbReference type="GO" id="GO:0005615">
    <property type="term" value="C:extracellular space"/>
    <property type="evidence" value="ECO:0000318"/>
    <property type="project" value="GO_Central"/>
</dbReference>
<dbReference type="GO" id="GO:0004867">
    <property type="term" value="F:serine-type endopeptidase inhibitor activity"/>
    <property type="evidence" value="ECO:0000318"/>
    <property type="project" value="GO_Central"/>
</dbReference>
<dbReference type="GO" id="GO:0019731">
    <property type="term" value="P:antibacterial humoral response"/>
    <property type="evidence" value="ECO:0000318"/>
    <property type="project" value="GO_Central"/>
</dbReference>
<dbReference type="GO" id="GO:0045087">
    <property type="term" value="P:innate immune response"/>
    <property type="evidence" value="ECO:0000318"/>
    <property type="project" value="GO_Central"/>
</dbReference>
<name>WFDC9_HUMAN</name>
<gene>
    <name type="primary">WFDC9</name>
    <name type="synonym">WAP9</name>
</gene>
<accession>Q8NEX5</accession>
<accession>Q3MIX6</accession>
<accession>Q5TGZ8</accession>
<keyword id="KW-1267">Proteomics identification</keyword>
<keyword id="KW-1185">Reference proteome</keyword>
<keyword id="KW-0964">Secreted</keyword>
<keyword id="KW-0732">Signal</keyword>